<accession>Q9GZN2</accession>
<accession>B2R9U3</accession>
<accession>E1P5T9</accession>
<accession>H0YNI0</accession>
<dbReference type="EMBL" id="AB042646">
    <property type="protein sequence ID" value="BAB16424.1"/>
    <property type="molecule type" value="mRNA"/>
</dbReference>
<dbReference type="EMBL" id="BX377269">
    <property type="status" value="NOT_ANNOTATED_CDS"/>
    <property type="molecule type" value="mRNA"/>
</dbReference>
<dbReference type="EMBL" id="AK074802">
    <property type="protein sequence ID" value="BAC11216.1"/>
    <property type="molecule type" value="mRNA"/>
</dbReference>
<dbReference type="EMBL" id="AK313919">
    <property type="protein sequence ID" value="BAG36640.1"/>
    <property type="molecule type" value="mRNA"/>
</dbReference>
<dbReference type="EMBL" id="AL050318">
    <property type="status" value="NOT_ANNOTATED_CDS"/>
    <property type="molecule type" value="Genomic_DNA"/>
</dbReference>
<dbReference type="EMBL" id="CH471077">
    <property type="protein sequence ID" value="EAW76127.1"/>
    <property type="molecule type" value="Genomic_DNA"/>
</dbReference>
<dbReference type="EMBL" id="CH471077">
    <property type="protein sequence ID" value="EAW76128.1"/>
    <property type="molecule type" value="Genomic_DNA"/>
</dbReference>
<dbReference type="EMBL" id="BC006549">
    <property type="protein sequence ID" value="AAH06549.1"/>
    <property type="molecule type" value="mRNA"/>
</dbReference>
<dbReference type="EMBL" id="BC012816">
    <property type="protein sequence ID" value="AAH12816.1"/>
    <property type="molecule type" value="mRNA"/>
</dbReference>
<dbReference type="CCDS" id="CCDS13278.1">
    <molecule id="Q9GZN2-1"/>
</dbReference>
<dbReference type="PIR" id="JC7392">
    <property type="entry name" value="JC7392"/>
</dbReference>
<dbReference type="RefSeq" id="NP_001186442.1">
    <molecule id="Q9GZN2-1"/>
    <property type="nucleotide sequence ID" value="NM_001199513.2"/>
</dbReference>
<dbReference type="RefSeq" id="NP_001186443.1">
    <molecule id="Q9GZN2-1"/>
    <property type="nucleotide sequence ID" value="NM_001199514.2"/>
</dbReference>
<dbReference type="RefSeq" id="NP_001186444.1">
    <molecule id="Q9GZN2-1"/>
    <property type="nucleotide sequence ID" value="NM_001199515.2"/>
</dbReference>
<dbReference type="RefSeq" id="NP_068581.1">
    <molecule id="Q9GZN2-1"/>
    <property type="nucleotide sequence ID" value="NM_021809.7"/>
</dbReference>
<dbReference type="SMR" id="Q9GZN2"/>
<dbReference type="BioGRID" id="121908">
    <property type="interactions" value="29"/>
</dbReference>
<dbReference type="BioGRID" id="1529332">
    <property type="interactions" value="5"/>
</dbReference>
<dbReference type="FunCoup" id="Q9GZN2">
    <property type="interactions" value="1576"/>
</dbReference>
<dbReference type="IntAct" id="Q9GZN2">
    <property type="interactions" value="14"/>
</dbReference>
<dbReference type="STRING" id="9606.ENSP00000362981"/>
<dbReference type="GlyGen" id="Q9GZN2">
    <property type="glycosylation" value="2 sites, 1 O-linked glycan (1 site)"/>
</dbReference>
<dbReference type="iPTMnet" id="Q9GZN2"/>
<dbReference type="PhosphoSitePlus" id="Q9GZN2"/>
<dbReference type="BioMuta" id="TGIF2"/>
<dbReference type="DMDM" id="27805750"/>
<dbReference type="jPOST" id="Q9GZN2"/>
<dbReference type="MassIVE" id="Q9GZN2"/>
<dbReference type="PaxDb" id="9606-ENSP00000362981"/>
<dbReference type="PeptideAtlas" id="Q9GZN2"/>
<dbReference type="ProteomicsDB" id="80096">
    <molecule id="Q9GZN2-1"/>
</dbReference>
<dbReference type="Pumba" id="Q9GZN2"/>
<dbReference type="Antibodypedia" id="26532">
    <property type="antibodies" value="358 antibodies from 32 providers"/>
</dbReference>
<dbReference type="DNASU" id="60436"/>
<dbReference type="Ensembl" id="ENST00000373872.9">
    <molecule id="Q9GZN2-1"/>
    <property type="protein sequence ID" value="ENSP00000362979.3"/>
    <property type="gene ID" value="ENSG00000118707.11"/>
</dbReference>
<dbReference type="Ensembl" id="ENST00000373874.6">
    <molecule id="Q9GZN2-1"/>
    <property type="protein sequence ID" value="ENSP00000362981.2"/>
    <property type="gene ID" value="ENSG00000118707.11"/>
</dbReference>
<dbReference type="Ensembl" id="ENST00000560025.1">
    <molecule id="Q9GZN2-1"/>
    <property type="protein sequence ID" value="ENSP00000453773.1"/>
    <property type="gene ID" value="ENSG00000118707.11"/>
</dbReference>
<dbReference type="Ensembl" id="ENST00000611732.4">
    <molecule id="Q9GZN2-1"/>
    <property type="protein sequence ID" value="ENSP00000481787.1"/>
    <property type="gene ID" value="ENSG00000118707.11"/>
</dbReference>
<dbReference type="Ensembl" id="ENST00000650844.1">
    <molecule id="Q9GZN2-1"/>
    <property type="protein sequence ID" value="ENSP00000498657.1"/>
    <property type="gene ID" value="ENSG00000118707.11"/>
</dbReference>
<dbReference type="GeneID" id="60436"/>
<dbReference type="KEGG" id="hsa:60436"/>
<dbReference type="MANE-Select" id="ENST00000373872.9">
    <property type="protein sequence ID" value="ENSP00000362979.3"/>
    <property type="RefSeq nucleotide sequence ID" value="NM_021809.7"/>
    <property type="RefSeq protein sequence ID" value="NP_068581.1"/>
</dbReference>
<dbReference type="UCSC" id="uc002xfn.4">
    <molecule id="Q9GZN2-1"/>
    <property type="organism name" value="human"/>
</dbReference>
<dbReference type="AGR" id="HGNC:15764"/>
<dbReference type="CTD" id="60436"/>
<dbReference type="DisGeNET" id="60436"/>
<dbReference type="GeneCards" id="TGIF2"/>
<dbReference type="HGNC" id="HGNC:15764">
    <property type="gene designation" value="TGIF2"/>
</dbReference>
<dbReference type="HPA" id="ENSG00000118707">
    <property type="expression patterns" value="Low tissue specificity"/>
</dbReference>
<dbReference type="MIM" id="607294">
    <property type="type" value="gene"/>
</dbReference>
<dbReference type="neXtProt" id="NX_Q9GZN2"/>
<dbReference type="OpenTargets" id="ENSG00000118707"/>
<dbReference type="PharmGKB" id="PA38035"/>
<dbReference type="VEuPathDB" id="HostDB:ENSG00000118707"/>
<dbReference type="eggNOG" id="KOG0773">
    <property type="taxonomic scope" value="Eukaryota"/>
</dbReference>
<dbReference type="GeneTree" id="ENSGT00940000159849"/>
<dbReference type="InParanoid" id="Q9GZN2"/>
<dbReference type="OMA" id="CWECSAS"/>
<dbReference type="OrthoDB" id="10056939at2759"/>
<dbReference type="PAN-GO" id="Q9GZN2">
    <property type="GO annotations" value="3 GO annotations based on evolutionary models"/>
</dbReference>
<dbReference type="PhylomeDB" id="Q9GZN2"/>
<dbReference type="TreeFam" id="TF314558"/>
<dbReference type="TreeFam" id="TF318093"/>
<dbReference type="PathwayCommons" id="Q9GZN2"/>
<dbReference type="Reactome" id="R-HSA-2173795">
    <property type="pathway name" value="Downregulation of SMAD2/3:SMAD4 transcriptional activity"/>
</dbReference>
<dbReference type="Reactome" id="R-HSA-2173796">
    <property type="pathway name" value="SMAD2/SMAD3:SMAD4 heterotrimer regulates transcription"/>
</dbReference>
<dbReference type="SignaLink" id="Q9GZN2"/>
<dbReference type="BioGRID-ORCS" id="60436">
    <property type="hits" value="26 hits in 1171 CRISPR screens"/>
</dbReference>
<dbReference type="GeneWiki" id="TGIF2"/>
<dbReference type="GenomeRNAi" id="60436"/>
<dbReference type="Pharos" id="Q9GZN2">
    <property type="development level" value="Tbio"/>
</dbReference>
<dbReference type="PRO" id="PR:Q9GZN2"/>
<dbReference type="Proteomes" id="UP000005640">
    <property type="component" value="Chromosome 20"/>
</dbReference>
<dbReference type="RNAct" id="Q9GZN2">
    <property type="molecule type" value="protein"/>
</dbReference>
<dbReference type="Bgee" id="ENSG00000118707">
    <property type="expression patterns" value="Expressed in ventricular zone and 166 other cell types or tissues"/>
</dbReference>
<dbReference type="ExpressionAtlas" id="Q9GZN2">
    <property type="expression patterns" value="baseline and differential"/>
</dbReference>
<dbReference type="GO" id="GO:0005813">
    <property type="term" value="C:centrosome"/>
    <property type="evidence" value="ECO:0000314"/>
    <property type="project" value="HPA"/>
</dbReference>
<dbReference type="GO" id="GO:0000785">
    <property type="term" value="C:chromatin"/>
    <property type="evidence" value="ECO:0000247"/>
    <property type="project" value="NTNU_SB"/>
</dbReference>
<dbReference type="GO" id="GO:0005654">
    <property type="term" value="C:nucleoplasm"/>
    <property type="evidence" value="ECO:0000314"/>
    <property type="project" value="HPA"/>
</dbReference>
<dbReference type="GO" id="GO:0005634">
    <property type="term" value="C:nucleus"/>
    <property type="evidence" value="ECO:0000304"/>
    <property type="project" value="UniProtKB"/>
</dbReference>
<dbReference type="GO" id="GO:0003700">
    <property type="term" value="F:DNA-binding transcription factor activity"/>
    <property type="evidence" value="ECO:0000303"/>
    <property type="project" value="UniProtKB"/>
</dbReference>
<dbReference type="GO" id="GO:0000981">
    <property type="term" value="F:DNA-binding transcription factor activity, RNA polymerase II-specific"/>
    <property type="evidence" value="ECO:0000247"/>
    <property type="project" value="NTNU_SB"/>
</dbReference>
<dbReference type="GO" id="GO:0001227">
    <property type="term" value="F:DNA-binding transcription repressor activity, RNA polymerase II-specific"/>
    <property type="evidence" value="ECO:0000318"/>
    <property type="project" value="GO_Central"/>
</dbReference>
<dbReference type="GO" id="GO:1990837">
    <property type="term" value="F:sequence-specific double-stranded DNA binding"/>
    <property type="evidence" value="ECO:0000314"/>
    <property type="project" value="ARUK-UCL"/>
</dbReference>
<dbReference type="GO" id="GO:0035881">
    <property type="term" value="P:amacrine cell differentiation"/>
    <property type="evidence" value="ECO:0007669"/>
    <property type="project" value="Ensembl"/>
</dbReference>
<dbReference type="GO" id="GO:0000122">
    <property type="term" value="P:negative regulation of transcription by RNA polymerase II"/>
    <property type="evidence" value="ECO:0000315"/>
    <property type="project" value="BHF-UCL"/>
</dbReference>
<dbReference type="GO" id="GO:0038092">
    <property type="term" value="P:nodal signaling pathway"/>
    <property type="evidence" value="ECO:0007669"/>
    <property type="project" value="Ensembl"/>
</dbReference>
<dbReference type="GO" id="GO:1902871">
    <property type="term" value="P:positive regulation of amacrine cell differentiation"/>
    <property type="evidence" value="ECO:0007669"/>
    <property type="project" value="Ensembl"/>
</dbReference>
<dbReference type="GO" id="GO:0006355">
    <property type="term" value="P:regulation of DNA-templated transcription"/>
    <property type="evidence" value="ECO:0000303"/>
    <property type="project" value="UniProtKB"/>
</dbReference>
<dbReference type="GO" id="GO:0010470">
    <property type="term" value="P:regulation of gastrulation"/>
    <property type="evidence" value="ECO:0007669"/>
    <property type="project" value="Ensembl"/>
</dbReference>
<dbReference type="CDD" id="cd00086">
    <property type="entry name" value="homeodomain"/>
    <property type="match status" value="1"/>
</dbReference>
<dbReference type="FunFam" id="1.10.10.60:FF:000059">
    <property type="entry name" value="TGFB-induced factor homeobox 1"/>
    <property type="match status" value="1"/>
</dbReference>
<dbReference type="Gene3D" id="1.10.10.60">
    <property type="entry name" value="Homeodomain-like"/>
    <property type="match status" value="1"/>
</dbReference>
<dbReference type="InterPro" id="IPR001356">
    <property type="entry name" value="HD"/>
</dbReference>
<dbReference type="InterPro" id="IPR009057">
    <property type="entry name" value="Homeodomain-like_sf"/>
</dbReference>
<dbReference type="InterPro" id="IPR008422">
    <property type="entry name" value="KN_HD"/>
</dbReference>
<dbReference type="InterPro" id="IPR050224">
    <property type="entry name" value="TALE_homeobox"/>
</dbReference>
<dbReference type="PANTHER" id="PTHR11850">
    <property type="entry name" value="HOMEOBOX PROTEIN TRANSCRIPTION FACTORS"/>
    <property type="match status" value="1"/>
</dbReference>
<dbReference type="Pfam" id="PF05920">
    <property type="entry name" value="Homeobox_KN"/>
    <property type="match status" value="1"/>
</dbReference>
<dbReference type="SMART" id="SM00389">
    <property type="entry name" value="HOX"/>
    <property type="match status" value="1"/>
</dbReference>
<dbReference type="SUPFAM" id="SSF46689">
    <property type="entry name" value="Homeodomain-like"/>
    <property type="match status" value="1"/>
</dbReference>
<dbReference type="PROSITE" id="PS50071">
    <property type="entry name" value="HOMEOBOX_2"/>
    <property type="match status" value="1"/>
</dbReference>
<reference key="1">
    <citation type="journal article" date="2000" name="Biochem. Biophys. Res. Commun.">
        <title>Amplification and overexpression of TGIF2, a novel homeobox gene of the TALE superclass, in ovarian cancer cell lines.</title>
        <authorList>
            <person name="Imoto I."/>
            <person name="Pimkhaokham A."/>
            <person name="Watanabe T."/>
            <person name="Saito-Ohara F."/>
            <person name="Soeda E."/>
            <person name="Inazawa J."/>
        </authorList>
    </citation>
    <scope>NUCLEOTIDE SEQUENCE [MRNA] (ISOFORM 1)</scope>
    <source>
        <tissue>Ovarian carcinoma</tissue>
    </source>
</reference>
<reference key="2">
    <citation type="submission" date="2003-04" db="EMBL/GenBank/DDBJ databases">
        <title>Full-length cDNA libraries and normalization.</title>
        <authorList>
            <person name="Li W.B."/>
            <person name="Gruber C."/>
            <person name="Jessee J."/>
            <person name="Polayes D."/>
        </authorList>
    </citation>
    <scope>NUCLEOTIDE SEQUENCE [LARGE SCALE MRNA] (ISOFORM 2)</scope>
    <source>
        <tissue>Placenta</tissue>
    </source>
</reference>
<reference key="3">
    <citation type="journal article" date="2004" name="Nat. Genet.">
        <title>Complete sequencing and characterization of 21,243 full-length human cDNAs.</title>
        <authorList>
            <person name="Ota T."/>
            <person name="Suzuki Y."/>
            <person name="Nishikawa T."/>
            <person name="Otsuki T."/>
            <person name="Sugiyama T."/>
            <person name="Irie R."/>
            <person name="Wakamatsu A."/>
            <person name="Hayashi K."/>
            <person name="Sato H."/>
            <person name="Nagai K."/>
            <person name="Kimura K."/>
            <person name="Makita H."/>
            <person name="Sekine M."/>
            <person name="Obayashi M."/>
            <person name="Nishi T."/>
            <person name="Shibahara T."/>
            <person name="Tanaka T."/>
            <person name="Ishii S."/>
            <person name="Yamamoto J."/>
            <person name="Saito K."/>
            <person name="Kawai Y."/>
            <person name="Isono Y."/>
            <person name="Nakamura Y."/>
            <person name="Nagahari K."/>
            <person name="Murakami K."/>
            <person name="Yasuda T."/>
            <person name="Iwayanagi T."/>
            <person name="Wagatsuma M."/>
            <person name="Shiratori A."/>
            <person name="Sudo H."/>
            <person name="Hosoiri T."/>
            <person name="Kaku Y."/>
            <person name="Kodaira H."/>
            <person name="Kondo H."/>
            <person name="Sugawara M."/>
            <person name="Takahashi M."/>
            <person name="Kanda K."/>
            <person name="Yokoi T."/>
            <person name="Furuya T."/>
            <person name="Kikkawa E."/>
            <person name="Omura Y."/>
            <person name="Abe K."/>
            <person name="Kamihara K."/>
            <person name="Katsuta N."/>
            <person name="Sato K."/>
            <person name="Tanikawa M."/>
            <person name="Yamazaki M."/>
            <person name="Ninomiya K."/>
            <person name="Ishibashi T."/>
            <person name="Yamashita H."/>
            <person name="Murakawa K."/>
            <person name="Fujimori K."/>
            <person name="Tanai H."/>
            <person name="Kimata M."/>
            <person name="Watanabe M."/>
            <person name="Hiraoka S."/>
            <person name="Chiba Y."/>
            <person name="Ishida S."/>
            <person name="Ono Y."/>
            <person name="Takiguchi S."/>
            <person name="Watanabe S."/>
            <person name="Yosida M."/>
            <person name="Hotuta T."/>
            <person name="Kusano J."/>
            <person name="Kanehori K."/>
            <person name="Takahashi-Fujii A."/>
            <person name="Hara H."/>
            <person name="Tanase T.-O."/>
            <person name="Nomura Y."/>
            <person name="Togiya S."/>
            <person name="Komai F."/>
            <person name="Hara R."/>
            <person name="Takeuchi K."/>
            <person name="Arita M."/>
            <person name="Imose N."/>
            <person name="Musashino K."/>
            <person name="Yuuki H."/>
            <person name="Oshima A."/>
            <person name="Sasaki N."/>
            <person name="Aotsuka S."/>
            <person name="Yoshikawa Y."/>
            <person name="Matsunawa H."/>
            <person name="Ichihara T."/>
            <person name="Shiohata N."/>
            <person name="Sano S."/>
            <person name="Moriya S."/>
            <person name="Momiyama H."/>
            <person name="Satoh N."/>
            <person name="Takami S."/>
            <person name="Terashima Y."/>
            <person name="Suzuki O."/>
            <person name="Nakagawa S."/>
            <person name="Senoh A."/>
            <person name="Mizoguchi H."/>
            <person name="Goto Y."/>
            <person name="Shimizu F."/>
            <person name="Wakebe H."/>
            <person name="Hishigaki H."/>
            <person name="Watanabe T."/>
            <person name="Sugiyama A."/>
            <person name="Takemoto M."/>
            <person name="Kawakami B."/>
            <person name="Yamazaki M."/>
            <person name="Watanabe K."/>
            <person name="Kumagai A."/>
            <person name="Itakura S."/>
            <person name="Fukuzumi Y."/>
            <person name="Fujimori Y."/>
            <person name="Komiyama M."/>
            <person name="Tashiro H."/>
            <person name="Tanigami A."/>
            <person name="Fujiwara T."/>
            <person name="Ono T."/>
            <person name="Yamada K."/>
            <person name="Fujii Y."/>
            <person name="Ozaki K."/>
            <person name="Hirao M."/>
            <person name="Ohmori Y."/>
            <person name="Kawabata A."/>
            <person name="Hikiji T."/>
            <person name="Kobatake N."/>
            <person name="Inagaki H."/>
            <person name="Ikema Y."/>
            <person name="Okamoto S."/>
            <person name="Okitani R."/>
            <person name="Kawakami T."/>
            <person name="Noguchi S."/>
            <person name="Itoh T."/>
            <person name="Shigeta K."/>
            <person name="Senba T."/>
            <person name="Matsumura K."/>
            <person name="Nakajima Y."/>
            <person name="Mizuno T."/>
            <person name="Morinaga M."/>
            <person name="Sasaki M."/>
            <person name="Togashi T."/>
            <person name="Oyama M."/>
            <person name="Hata H."/>
            <person name="Watanabe M."/>
            <person name="Komatsu T."/>
            <person name="Mizushima-Sugano J."/>
            <person name="Satoh T."/>
            <person name="Shirai Y."/>
            <person name="Takahashi Y."/>
            <person name="Nakagawa K."/>
            <person name="Okumura K."/>
            <person name="Nagase T."/>
            <person name="Nomura N."/>
            <person name="Kikuchi H."/>
            <person name="Masuho Y."/>
            <person name="Yamashita R."/>
            <person name="Nakai K."/>
            <person name="Yada T."/>
            <person name="Nakamura Y."/>
            <person name="Ohara O."/>
            <person name="Isogai T."/>
            <person name="Sugano S."/>
        </authorList>
    </citation>
    <scope>NUCLEOTIDE SEQUENCE [LARGE SCALE MRNA] (ISOFORM 1)</scope>
    <source>
        <tissue>Tongue</tissue>
    </source>
</reference>
<reference key="4">
    <citation type="journal article" date="2001" name="Nature">
        <title>The DNA sequence and comparative analysis of human chromosome 20.</title>
        <authorList>
            <person name="Deloukas P."/>
            <person name="Matthews L.H."/>
            <person name="Ashurst J.L."/>
            <person name="Burton J."/>
            <person name="Gilbert J.G.R."/>
            <person name="Jones M."/>
            <person name="Stavrides G."/>
            <person name="Almeida J.P."/>
            <person name="Babbage A.K."/>
            <person name="Bagguley C.L."/>
            <person name="Bailey J."/>
            <person name="Barlow K.F."/>
            <person name="Bates K.N."/>
            <person name="Beard L.M."/>
            <person name="Beare D.M."/>
            <person name="Beasley O.P."/>
            <person name="Bird C.P."/>
            <person name="Blakey S.E."/>
            <person name="Bridgeman A.M."/>
            <person name="Brown A.J."/>
            <person name="Buck D."/>
            <person name="Burrill W.D."/>
            <person name="Butler A.P."/>
            <person name="Carder C."/>
            <person name="Carter N.P."/>
            <person name="Chapman J.C."/>
            <person name="Clamp M."/>
            <person name="Clark G."/>
            <person name="Clark L.N."/>
            <person name="Clark S.Y."/>
            <person name="Clee C.M."/>
            <person name="Clegg S."/>
            <person name="Cobley V.E."/>
            <person name="Collier R.E."/>
            <person name="Connor R.E."/>
            <person name="Corby N.R."/>
            <person name="Coulson A."/>
            <person name="Coville G.J."/>
            <person name="Deadman R."/>
            <person name="Dhami P.D."/>
            <person name="Dunn M."/>
            <person name="Ellington A.G."/>
            <person name="Frankland J.A."/>
            <person name="Fraser A."/>
            <person name="French L."/>
            <person name="Garner P."/>
            <person name="Grafham D.V."/>
            <person name="Griffiths C."/>
            <person name="Griffiths M.N.D."/>
            <person name="Gwilliam R."/>
            <person name="Hall R.E."/>
            <person name="Hammond S."/>
            <person name="Harley J.L."/>
            <person name="Heath P.D."/>
            <person name="Ho S."/>
            <person name="Holden J.L."/>
            <person name="Howden P.J."/>
            <person name="Huckle E."/>
            <person name="Hunt A.R."/>
            <person name="Hunt S.E."/>
            <person name="Jekosch K."/>
            <person name="Johnson C.M."/>
            <person name="Johnson D."/>
            <person name="Kay M.P."/>
            <person name="Kimberley A.M."/>
            <person name="King A."/>
            <person name="Knights A."/>
            <person name="Laird G.K."/>
            <person name="Lawlor S."/>
            <person name="Lehvaeslaiho M.H."/>
            <person name="Leversha M.A."/>
            <person name="Lloyd C."/>
            <person name="Lloyd D.M."/>
            <person name="Lovell J.D."/>
            <person name="Marsh V.L."/>
            <person name="Martin S.L."/>
            <person name="McConnachie L.J."/>
            <person name="McLay K."/>
            <person name="McMurray A.A."/>
            <person name="Milne S.A."/>
            <person name="Mistry D."/>
            <person name="Moore M.J.F."/>
            <person name="Mullikin J.C."/>
            <person name="Nickerson T."/>
            <person name="Oliver K."/>
            <person name="Parker A."/>
            <person name="Patel R."/>
            <person name="Pearce T.A.V."/>
            <person name="Peck A.I."/>
            <person name="Phillimore B.J.C.T."/>
            <person name="Prathalingam S.R."/>
            <person name="Plumb R.W."/>
            <person name="Ramsay H."/>
            <person name="Rice C.M."/>
            <person name="Ross M.T."/>
            <person name="Scott C.E."/>
            <person name="Sehra H.K."/>
            <person name="Shownkeen R."/>
            <person name="Sims S."/>
            <person name="Skuce C.D."/>
            <person name="Smith M.L."/>
            <person name="Soderlund C."/>
            <person name="Steward C.A."/>
            <person name="Sulston J.E."/>
            <person name="Swann R.M."/>
            <person name="Sycamore N."/>
            <person name="Taylor R."/>
            <person name="Tee L."/>
            <person name="Thomas D.W."/>
            <person name="Thorpe A."/>
            <person name="Tracey A."/>
            <person name="Tromans A.C."/>
            <person name="Vaudin M."/>
            <person name="Wall M."/>
            <person name="Wallis J.M."/>
            <person name="Whitehead S.L."/>
            <person name="Whittaker P."/>
            <person name="Willey D.L."/>
            <person name="Williams L."/>
            <person name="Williams S.A."/>
            <person name="Wilming L."/>
            <person name="Wray P.W."/>
            <person name="Hubbard T."/>
            <person name="Durbin R.M."/>
            <person name="Bentley D.R."/>
            <person name="Beck S."/>
            <person name="Rogers J."/>
        </authorList>
    </citation>
    <scope>NUCLEOTIDE SEQUENCE [LARGE SCALE GENOMIC DNA]</scope>
</reference>
<reference key="5">
    <citation type="submission" date="2005-09" db="EMBL/GenBank/DDBJ databases">
        <authorList>
            <person name="Mural R.J."/>
            <person name="Istrail S."/>
            <person name="Sutton G.G."/>
            <person name="Florea L."/>
            <person name="Halpern A.L."/>
            <person name="Mobarry C.M."/>
            <person name="Lippert R."/>
            <person name="Walenz B."/>
            <person name="Shatkay H."/>
            <person name="Dew I."/>
            <person name="Miller J.R."/>
            <person name="Flanigan M.J."/>
            <person name="Edwards N.J."/>
            <person name="Bolanos R."/>
            <person name="Fasulo D."/>
            <person name="Halldorsson B.V."/>
            <person name="Hannenhalli S."/>
            <person name="Turner R."/>
            <person name="Yooseph S."/>
            <person name="Lu F."/>
            <person name="Nusskern D.R."/>
            <person name="Shue B.C."/>
            <person name="Zheng X.H."/>
            <person name="Zhong F."/>
            <person name="Delcher A.L."/>
            <person name="Huson D.H."/>
            <person name="Kravitz S.A."/>
            <person name="Mouchard L."/>
            <person name="Reinert K."/>
            <person name="Remington K.A."/>
            <person name="Clark A.G."/>
            <person name="Waterman M.S."/>
            <person name="Eichler E.E."/>
            <person name="Adams M.D."/>
            <person name="Hunkapiller M.W."/>
            <person name="Myers E.W."/>
            <person name="Venter J.C."/>
        </authorList>
    </citation>
    <scope>NUCLEOTIDE SEQUENCE [LARGE SCALE GENOMIC DNA]</scope>
</reference>
<reference key="6">
    <citation type="journal article" date="2004" name="Genome Res.">
        <title>The status, quality, and expansion of the NIH full-length cDNA project: the Mammalian Gene Collection (MGC).</title>
        <authorList>
            <consortium name="The MGC Project Team"/>
        </authorList>
    </citation>
    <scope>NUCLEOTIDE SEQUENCE [LARGE SCALE MRNA] (ISOFORM 1)</scope>
    <source>
        <tissue>Muscle</tissue>
    </source>
</reference>
<reference key="7">
    <citation type="journal article" date="2001" name="J. Biol. Chem.">
        <title>TGIF2 interacts with histone deacetylase 1 and represses transcription.</title>
        <authorList>
            <person name="Melhuish T.A."/>
            <person name="Gallo C.M."/>
            <person name="Wotton D."/>
        </authorList>
    </citation>
    <scope>FUNCTION</scope>
    <scope>PHOSPHORYLATION AT THR-182 AND THR-186</scope>
    <scope>INTERACTION WITH HDAC1 AND SMAD3</scope>
    <scope>MUTAGENESIS OF THR-182 AND THR-186</scope>
</reference>
<protein>
    <recommendedName>
        <fullName>Homeobox protein TGIF2</fullName>
    </recommendedName>
    <alternativeName>
        <fullName>5'-TG-3'-interacting factor 2</fullName>
    </alternativeName>
    <alternativeName>
        <fullName>TGF-beta-induced transcription factor 2</fullName>
        <shortName>TGFB-induced factor 2</shortName>
    </alternativeName>
</protein>
<name>TGIF2_HUMAN</name>
<gene>
    <name type="primary">TGIF2</name>
</gene>
<proteinExistence type="evidence at protein level"/>
<comment type="function">
    <text evidence="3">Transcriptional repressor, which probably repress transcription by binding directly the 5'-CTGTCAA-3' DNA sequence or by interacting with TGF-beta activated SMAD proteins. Probably represses transcription via the recruitment of histone deacetylase proteins.</text>
</comment>
<comment type="subunit">
    <text evidence="3">Interacts with the transcriptional modulator SMAD3 and the histone deacetylase HDAC1.</text>
</comment>
<comment type="subcellular location">
    <subcellularLocation>
        <location>Nucleus</location>
    </subcellularLocation>
    <text>Excluded from nucleoli.</text>
</comment>
<comment type="alternative products">
    <event type="alternative splicing"/>
    <isoform>
        <id>Q9GZN2-1</id>
        <name>1</name>
        <sequence type="displayed"/>
    </isoform>
    <isoform>
        <id>Q9GZN2-2</id>
        <name>2</name>
        <sequence type="described" ref="VSP_047346 VSP_047347"/>
    </isoform>
</comment>
<comment type="tissue specificity">
    <text>Widely expressed. Highly expressed in heart, kidney and testis. Weakly expressed in brain and prostate.</text>
</comment>
<comment type="PTM">
    <text evidence="3">The C-terminal part is phosphorylated in response to EGF signaling by the Ras/MAPK pathway.</text>
</comment>
<comment type="miscellaneous">
    <text>TGIF2 is amplified and overexpressed in several ovarian cancer cell lines.</text>
</comment>
<comment type="similarity">
    <text evidence="5">Belongs to the TALE/TGIF homeobox family.</text>
</comment>
<comment type="sequence caution" evidence="5">
    <conflict type="frameshift">
        <sequence resource="EMBL" id="BX377269"/>
    </conflict>
</comment>
<keyword id="KW-0025">Alternative splicing</keyword>
<keyword id="KW-0238">DNA-binding</keyword>
<keyword id="KW-0371">Homeobox</keyword>
<keyword id="KW-0539">Nucleus</keyword>
<keyword id="KW-0597">Phosphoprotein</keyword>
<keyword id="KW-1267">Proteomics identification</keyword>
<keyword id="KW-1185">Reference proteome</keyword>
<keyword id="KW-0804">Transcription</keyword>
<keyword id="KW-0805">Transcription regulation</keyword>
<sequence>MSDSDLGEDEGLLSLAGKRKRRGNLPKESVKILRDWLYLHRYNAYPSEQEKLSLSGQTNLSVLQICNWFINARRRLLPDMLRKDGKDPNQFTISRRGGKASDVALPRGSSPSVLAVSVPAPTNVLSLSVCSMPLHSGQGEKPAAPFPRGELESPKPLVTPGSTLTLLTRAEAGSPTGGLFNTPPPTPPEQDKEDFSSFQLLVEVALQRAAEMELQKQQDPSLPLLHTPIPLVSENPQ</sequence>
<organism>
    <name type="scientific">Homo sapiens</name>
    <name type="common">Human</name>
    <dbReference type="NCBI Taxonomy" id="9606"/>
    <lineage>
        <taxon>Eukaryota</taxon>
        <taxon>Metazoa</taxon>
        <taxon>Chordata</taxon>
        <taxon>Craniata</taxon>
        <taxon>Vertebrata</taxon>
        <taxon>Euteleostomi</taxon>
        <taxon>Mammalia</taxon>
        <taxon>Eutheria</taxon>
        <taxon>Euarchontoglires</taxon>
        <taxon>Primates</taxon>
        <taxon>Haplorrhini</taxon>
        <taxon>Catarrhini</taxon>
        <taxon>Hominidae</taxon>
        <taxon>Homo</taxon>
    </lineage>
</organism>
<evidence type="ECO:0000255" key="1">
    <source>
        <dbReference type="PROSITE-ProRule" id="PRU00108"/>
    </source>
</evidence>
<evidence type="ECO:0000256" key="2">
    <source>
        <dbReference type="SAM" id="MobiDB-lite"/>
    </source>
</evidence>
<evidence type="ECO:0000269" key="3">
    <source>
    </source>
</evidence>
<evidence type="ECO:0000303" key="4">
    <source ref="2"/>
</evidence>
<evidence type="ECO:0000305" key="5"/>
<feature type="chain" id="PRO_0000049321" description="Homeobox protein TGIF2">
    <location>
        <begin position="1"/>
        <end position="237"/>
    </location>
</feature>
<feature type="DNA-binding region" description="Homeobox; TALE-type" evidence="1">
    <location>
        <begin position="16"/>
        <end position="79"/>
    </location>
</feature>
<feature type="region of interest" description="Disordered" evidence="2">
    <location>
        <begin position="87"/>
        <end position="106"/>
    </location>
</feature>
<feature type="region of interest" description="Repressive function">
    <location>
        <begin position="103"/>
        <end position="237"/>
    </location>
</feature>
<feature type="region of interest" description="Disordered" evidence="2">
    <location>
        <begin position="172"/>
        <end position="193"/>
    </location>
</feature>
<feature type="region of interest" description="Disordered" evidence="2">
    <location>
        <begin position="213"/>
        <end position="237"/>
    </location>
</feature>
<feature type="modified residue" description="Phosphothreonine" evidence="3">
    <location>
        <position position="182"/>
    </location>
</feature>
<feature type="modified residue" description="Phosphothreonine" evidence="3">
    <location>
        <position position="186"/>
    </location>
</feature>
<feature type="splice variant" id="VSP_047346" description="In isoform 2." evidence="4">
    <original>ICNWFINARRRLLPDMLRKDGKDPNQFTISRRGGKASDVALPRGSSPSVLAVSVPAPTNVLSLSVCSMPLHSGQGEKPAAPFPRGELESPK</original>
    <variation>DEFLDVIYWFRQIIAVVLGVIWGVLPLRGFLGIAGFCLINAGVLYLYFSNYLQIDEEEYGGTWELTKEGFMTSFALFMVIWIIFYTAIHYD</variation>
    <location>
        <begin position="65"/>
        <end position="155"/>
    </location>
</feature>
<feature type="splice variant" id="VSP_047347" description="In isoform 2." evidence="4">
    <location>
        <begin position="156"/>
        <end position="237"/>
    </location>
</feature>
<feature type="mutagenesis site" description="Decrease of phosphorylation. Strong decrease of phosphorylation; when associated with V-186." evidence="3">
    <original>T</original>
    <variation>V</variation>
    <location>
        <position position="182"/>
    </location>
</feature>
<feature type="mutagenesis site" description="Decrease of phosphorylation. Strong decrease of phosphorylation; when associated with V-182." evidence="3">
    <original>T</original>
    <variation>V</variation>
    <location>
        <position position="186"/>
    </location>
</feature>